<accession>O18815</accession>
<evidence type="ECO:0000250" key="1"/>
<evidence type="ECO:0000255" key="2"/>
<evidence type="ECO:0000305" key="3"/>
<comment type="function">
    <text>Has bactericidal activity.</text>
</comment>
<comment type="subcellular location">
    <subcellularLocation>
        <location>Secreted</location>
    </subcellularLocation>
</comment>
<comment type="similarity">
    <text evidence="3">Belongs to the beta-defensin family.</text>
</comment>
<keyword id="KW-0044">Antibiotic</keyword>
<keyword id="KW-0929">Antimicrobial</keyword>
<keyword id="KW-0211">Defensin</keyword>
<keyword id="KW-1015">Disulfide bond</keyword>
<keyword id="KW-1185">Reference proteome</keyword>
<keyword id="KW-0964">Secreted</keyword>
<keyword id="KW-0732">Signal</keyword>
<proteinExistence type="evidence at transcript level"/>
<organism>
    <name type="scientific">Bos taurus</name>
    <name type="common">Bovine</name>
    <dbReference type="NCBI Taxonomy" id="9913"/>
    <lineage>
        <taxon>Eukaryota</taxon>
        <taxon>Metazoa</taxon>
        <taxon>Chordata</taxon>
        <taxon>Craniata</taxon>
        <taxon>Vertebrata</taxon>
        <taxon>Euteleostomi</taxon>
        <taxon>Mammalia</taxon>
        <taxon>Eutheria</taxon>
        <taxon>Laurasiatheria</taxon>
        <taxon>Artiodactyla</taxon>
        <taxon>Ruminantia</taxon>
        <taxon>Pecora</taxon>
        <taxon>Bovidae</taxon>
        <taxon>Bovinae</taxon>
        <taxon>Bos</taxon>
    </lineage>
</organism>
<feature type="signal peptide" evidence="2">
    <location>
        <begin position="1" status="less than"/>
        <end status="unknown"/>
    </location>
</feature>
<feature type="propeptide" id="PRO_0000006886" evidence="2">
    <location>
        <begin status="unknown"/>
        <end position="15"/>
    </location>
</feature>
<feature type="peptide" id="PRO_0000006887" description="Beta-defensin C7">
    <location>
        <begin position="16"/>
        <end position="53"/>
    </location>
</feature>
<feature type="disulfide bond" evidence="1">
    <location>
        <begin position="20"/>
        <end position="49"/>
    </location>
</feature>
<feature type="disulfide bond" evidence="1">
    <location>
        <begin position="27"/>
        <end position="42"/>
    </location>
</feature>
<feature type="disulfide bond" evidence="1">
    <location>
        <begin position="32"/>
        <end position="50"/>
    </location>
</feature>
<feature type="non-terminal residue">
    <location>
        <position position="1"/>
    </location>
</feature>
<protein>
    <recommendedName>
        <fullName>Beta-defensin C7</fullName>
    </recommendedName>
    <alternativeName>
        <fullName>BBD(C7)</fullName>
    </alternativeName>
</protein>
<sequence length="53" mass="5650">LALLFLVLSAGSGISGPLSCRRKGGICILIRCPGPMRQIGTCFGRPVKCCRSW</sequence>
<name>DFBC7_BOVIN</name>
<reference key="1">
    <citation type="journal article" date="1998" name="Infect. Immun.">
        <title>Enteric beta-defensin: molecular cloning and characterization of a gene with inducible intestinal epithelial cell expression associated with Cryptosporidium parvum infection.</title>
        <authorList>
            <person name="Tarver A.P."/>
            <person name="Clark D.P."/>
            <person name="Diamond G."/>
            <person name="Russell J.P."/>
            <person name="Erdjument-Bromage H."/>
            <person name="Tempst P."/>
            <person name="Cohen K.S."/>
            <person name="Jones D.E."/>
            <person name="Sweeney R.W."/>
            <person name="Wines M."/>
            <person name="Hwang S."/>
            <person name="Bevins C.L."/>
        </authorList>
    </citation>
    <scope>NUCLEOTIDE SEQUENCE [MRNA]</scope>
    <source>
        <tissue>Small intestine</tissue>
    </source>
</reference>
<dbReference type="EMBL" id="AF016395">
    <property type="protein sequence ID" value="AAC48802.1"/>
    <property type="molecule type" value="mRNA"/>
</dbReference>
<dbReference type="SMR" id="O18815"/>
<dbReference type="FunCoup" id="O18815">
    <property type="interactions" value="23"/>
</dbReference>
<dbReference type="InParanoid" id="O18815"/>
<dbReference type="Proteomes" id="UP000009136">
    <property type="component" value="Unplaced"/>
</dbReference>
<dbReference type="GO" id="GO:0005615">
    <property type="term" value="C:extracellular space"/>
    <property type="evidence" value="ECO:0000318"/>
    <property type="project" value="GO_Central"/>
</dbReference>
<dbReference type="GO" id="GO:0031731">
    <property type="term" value="F:CCR6 chemokine receptor binding"/>
    <property type="evidence" value="ECO:0000318"/>
    <property type="project" value="GO_Central"/>
</dbReference>
<dbReference type="GO" id="GO:0042056">
    <property type="term" value="F:chemoattractant activity"/>
    <property type="evidence" value="ECO:0000318"/>
    <property type="project" value="GO_Central"/>
</dbReference>
<dbReference type="GO" id="GO:0060326">
    <property type="term" value="P:cell chemotaxis"/>
    <property type="evidence" value="ECO:0000318"/>
    <property type="project" value="GO_Central"/>
</dbReference>
<dbReference type="GO" id="GO:0042742">
    <property type="term" value="P:defense response to bacterium"/>
    <property type="evidence" value="ECO:0000318"/>
    <property type="project" value="GO_Central"/>
</dbReference>
<dbReference type="FunFam" id="3.10.360.10:FF:000001">
    <property type="entry name" value="Beta-defensin 1"/>
    <property type="match status" value="1"/>
</dbReference>
<dbReference type="Gene3D" id="3.10.360.10">
    <property type="entry name" value="Antimicrobial Peptide, Beta-defensin 2, Chain A"/>
    <property type="match status" value="1"/>
</dbReference>
<dbReference type="InterPro" id="IPR006080">
    <property type="entry name" value="Beta/alpha-defensin_C"/>
</dbReference>
<dbReference type="InterPro" id="IPR001855">
    <property type="entry name" value="Defensin_beta-like"/>
</dbReference>
<dbReference type="PANTHER" id="PTHR20515">
    <property type="entry name" value="BETA-DEFENSIN"/>
    <property type="match status" value="1"/>
</dbReference>
<dbReference type="PANTHER" id="PTHR20515:SF2">
    <property type="entry name" value="DEFENSIN BETA 4A"/>
    <property type="match status" value="1"/>
</dbReference>
<dbReference type="Pfam" id="PF00711">
    <property type="entry name" value="Defensin_beta"/>
    <property type="match status" value="1"/>
</dbReference>
<dbReference type="SMART" id="SM00048">
    <property type="entry name" value="DEFSN"/>
    <property type="match status" value="1"/>
</dbReference>
<dbReference type="SUPFAM" id="SSF57392">
    <property type="entry name" value="Defensin-like"/>
    <property type="match status" value="1"/>
</dbReference>